<gene>
    <name evidence="1" type="primary">surE</name>
    <name type="ordered locus">AZC_1219</name>
</gene>
<keyword id="KW-0963">Cytoplasm</keyword>
<keyword id="KW-0378">Hydrolase</keyword>
<keyword id="KW-0479">Metal-binding</keyword>
<keyword id="KW-0547">Nucleotide-binding</keyword>
<keyword id="KW-1185">Reference proteome</keyword>
<accession>A8I066</accession>
<organism>
    <name type="scientific">Azorhizobium caulinodans (strain ATCC 43989 / DSM 5975 / JCM 20966 / LMG 6465 / NBRC 14845 / NCIMB 13405 / ORS 571)</name>
    <dbReference type="NCBI Taxonomy" id="438753"/>
    <lineage>
        <taxon>Bacteria</taxon>
        <taxon>Pseudomonadati</taxon>
        <taxon>Pseudomonadota</taxon>
        <taxon>Alphaproteobacteria</taxon>
        <taxon>Hyphomicrobiales</taxon>
        <taxon>Xanthobacteraceae</taxon>
        <taxon>Azorhizobium</taxon>
    </lineage>
</organism>
<reference key="1">
    <citation type="submission" date="2007-04" db="EMBL/GenBank/DDBJ databases">
        <title>Complete genome sequence of the nitrogen-fixing bacterium Azorhizobium caulinodans ORS571.</title>
        <authorList>
            <person name="Lee K.B."/>
            <person name="Backer P.D."/>
            <person name="Aono T."/>
            <person name="Liu C.T."/>
            <person name="Suzuki S."/>
            <person name="Suzuki T."/>
            <person name="Kaneko T."/>
            <person name="Yamada M."/>
            <person name="Tabata S."/>
            <person name="Kupfer D.M."/>
            <person name="Najar F.Z."/>
            <person name="Wiley G.B."/>
            <person name="Roe B."/>
            <person name="Binnewies T."/>
            <person name="Ussery D."/>
            <person name="Vereecke D."/>
            <person name="Gevers D."/>
            <person name="Holsters M."/>
            <person name="Oyaizu H."/>
        </authorList>
    </citation>
    <scope>NUCLEOTIDE SEQUENCE [LARGE SCALE GENOMIC DNA]</scope>
    <source>
        <strain>ATCC 43989 / DSM 5975 / JCM 20966 / LMG 6465 / NBRC 14845 / NCIMB 13405 / ORS 571</strain>
    </source>
</reference>
<feature type="chain" id="PRO_1000071158" description="5'-nucleotidase SurE">
    <location>
        <begin position="1"/>
        <end position="255"/>
    </location>
</feature>
<feature type="binding site" evidence="1">
    <location>
        <position position="8"/>
    </location>
    <ligand>
        <name>a divalent metal cation</name>
        <dbReference type="ChEBI" id="CHEBI:60240"/>
    </ligand>
</feature>
<feature type="binding site" evidence="1">
    <location>
        <position position="9"/>
    </location>
    <ligand>
        <name>a divalent metal cation</name>
        <dbReference type="ChEBI" id="CHEBI:60240"/>
    </ligand>
</feature>
<feature type="binding site" evidence="1">
    <location>
        <position position="40"/>
    </location>
    <ligand>
        <name>a divalent metal cation</name>
        <dbReference type="ChEBI" id="CHEBI:60240"/>
    </ligand>
</feature>
<feature type="binding site" evidence="1">
    <location>
        <position position="93"/>
    </location>
    <ligand>
        <name>a divalent metal cation</name>
        <dbReference type="ChEBI" id="CHEBI:60240"/>
    </ligand>
</feature>
<sequence length="255" mass="27526">MRILVTNDDGIHAPGLDACARIAAALSDDVWVVAPETDQSGVAHSLSLNDPLRLRKVAAQRYAVKGTPTDCVIMAVRHVLIDNPPDLILSGVNRGQNIAEDVSYSGTVAGAIEGTILGIPSIALSQAFGPQTRDNPSYQTAETHGPDVIRTLLAEGIPAGVLINVNFPDRTPDQVAGIAVTAQGRRDQKLMRIDPRKDGRGNDYFWIAFERRSADTVPGSDLRALDEGRISVTPLRVEQTDEPMMTRLAQVFEAR</sequence>
<protein>
    <recommendedName>
        <fullName evidence="1">5'-nucleotidase SurE</fullName>
        <ecNumber evidence="1">3.1.3.5</ecNumber>
    </recommendedName>
    <alternativeName>
        <fullName evidence="1">Nucleoside 5'-monophosphate phosphohydrolase</fullName>
    </alternativeName>
</protein>
<evidence type="ECO:0000255" key="1">
    <source>
        <dbReference type="HAMAP-Rule" id="MF_00060"/>
    </source>
</evidence>
<proteinExistence type="inferred from homology"/>
<name>SURE_AZOC5</name>
<dbReference type="EC" id="3.1.3.5" evidence="1"/>
<dbReference type="EMBL" id="AP009384">
    <property type="protein sequence ID" value="BAF87217.1"/>
    <property type="molecule type" value="Genomic_DNA"/>
</dbReference>
<dbReference type="RefSeq" id="WP_012169750.1">
    <property type="nucleotide sequence ID" value="NC_009937.1"/>
</dbReference>
<dbReference type="SMR" id="A8I066"/>
<dbReference type="STRING" id="438753.AZC_1219"/>
<dbReference type="KEGG" id="azc:AZC_1219"/>
<dbReference type="eggNOG" id="COG0496">
    <property type="taxonomic scope" value="Bacteria"/>
</dbReference>
<dbReference type="HOGENOM" id="CLU_045192_1_2_5"/>
<dbReference type="Proteomes" id="UP000000270">
    <property type="component" value="Chromosome"/>
</dbReference>
<dbReference type="GO" id="GO:0005737">
    <property type="term" value="C:cytoplasm"/>
    <property type="evidence" value="ECO:0007669"/>
    <property type="project" value="UniProtKB-SubCell"/>
</dbReference>
<dbReference type="GO" id="GO:0008254">
    <property type="term" value="F:3'-nucleotidase activity"/>
    <property type="evidence" value="ECO:0007669"/>
    <property type="project" value="TreeGrafter"/>
</dbReference>
<dbReference type="GO" id="GO:0008253">
    <property type="term" value="F:5'-nucleotidase activity"/>
    <property type="evidence" value="ECO:0007669"/>
    <property type="project" value="UniProtKB-UniRule"/>
</dbReference>
<dbReference type="GO" id="GO:0004309">
    <property type="term" value="F:exopolyphosphatase activity"/>
    <property type="evidence" value="ECO:0007669"/>
    <property type="project" value="TreeGrafter"/>
</dbReference>
<dbReference type="GO" id="GO:0046872">
    <property type="term" value="F:metal ion binding"/>
    <property type="evidence" value="ECO:0007669"/>
    <property type="project" value="UniProtKB-UniRule"/>
</dbReference>
<dbReference type="GO" id="GO:0000166">
    <property type="term" value="F:nucleotide binding"/>
    <property type="evidence" value="ECO:0007669"/>
    <property type="project" value="UniProtKB-KW"/>
</dbReference>
<dbReference type="FunFam" id="3.40.1210.10:FF:000001">
    <property type="entry name" value="5'/3'-nucleotidase SurE"/>
    <property type="match status" value="1"/>
</dbReference>
<dbReference type="Gene3D" id="3.40.1210.10">
    <property type="entry name" value="Survival protein SurE-like phosphatase/nucleotidase"/>
    <property type="match status" value="1"/>
</dbReference>
<dbReference type="HAMAP" id="MF_00060">
    <property type="entry name" value="SurE"/>
    <property type="match status" value="1"/>
</dbReference>
<dbReference type="InterPro" id="IPR030048">
    <property type="entry name" value="SurE"/>
</dbReference>
<dbReference type="InterPro" id="IPR002828">
    <property type="entry name" value="SurE-like_Pase/nucleotidase"/>
</dbReference>
<dbReference type="InterPro" id="IPR036523">
    <property type="entry name" value="SurE-like_sf"/>
</dbReference>
<dbReference type="NCBIfam" id="NF001490">
    <property type="entry name" value="PRK00346.1-4"/>
    <property type="match status" value="1"/>
</dbReference>
<dbReference type="NCBIfam" id="TIGR00087">
    <property type="entry name" value="surE"/>
    <property type="match status" value="1"/>
</dbReference>
<dbReference type="PANTHER" id="PTHR30457">
    <property type="entry name" value="5'-NUCLEOTIDASE SURE"/>
    <property type="match status" value="1"/>
</dbReference>
<dbReference type="PANTHER" id="PTHR30457:SF12">
    <property type="entry name" value="5'_3'-NUCLEOTIDASE SURE"/>
    <property type="match status" value="1"/>
</dbReference>
<dbReference type="Pfam" id="PF01975">
    <property type="entry name" value="SurE"/>
    <property type="match status" value="1"/>
</dbReference>
<dbReference type="SUPFAM" id="SSF64167">
    <property type="entry name" value="SurE-like"/>
    <property type="match status" value="1"/>
</dbReference>
<comment type="function">
    <text evidence="1">Nucleotidase that shows phosphatase activity on nucleoside 5'-monophosphates.</text>
</comment>
<comment type="catalytic activity">
    <reaction evidence="1">
        <text>a ribonucleoside 5'-phosphate + H2O = a ribonucleoside + phosphate</text>
        <dbReference type="Rhea" id="RHEA:12484"/>
        <dbReference type="ChEBI" id="CHEBI:15377"/>
        <dbReference type="ChEBI" id="CHEBI:18254"/>
        <dbReference type="ChEBI" id="CHEBI:43474"/>
        <dbReference type="ChEBI" id="CHEBI:58043"/>
        <dbReference type="EC" id="3.1.3.5"/>
    </reaction>
</comment>
<comment type="cofactor">
    <cofactor evidence="1">
        <name>a divalent metal cation</name>
        <dbReference type="ChEBI" id="CHEBI:60240"/>
    </cofactor>
    <text evidence="1">Binds 1 divalent metal cation per subunit.</text>
</comment>
<comment type="subcellular location">
    <subcellularLocation>
        <location evidence="1">Cytoplasm</location>
    </subcellularLocation>
</comment>
<comment type="similarity">
    <text evidence="1">Belongs to the SurE nucleotidase family.</text>
</comment>